<comment type="function">
    <text evidence="1">Regulatory subunit of a potassium efflux system that confers protection against electrophiles. Required for full activity of KefB.</text>
</comment>
<comment type="catalytic activity">
    <reaction evidence="1">
        <text>a quinone + NADH + H(+) = a quinol + NAD(+)</text>
        <dbReference type="Rhea" id="RHEA:46160"/>
        <dbReference type="ChEBI" id="CHEBI:15378"/>
        <dbReference type="ChEBI" id="CHEBI:24646"/>
        <dbReference type="ChEBI" id="CHEBI:57540"/>
        <dbReference type="ChEBI" id="CHEBI:57945"/>
        <dbReference type="ChEBI" id="CHEBI:132124"/>
        <dbReference type="EC" id="1.6.5.2"/>
    </reaction>
</comment>
<comment type="catalytic activity">
    <reaction evidence="1">
        <text>a quinone + NADPH + H(+) = a quinol + NADP(+)</text>
        <dbReference type="Rhea" id="RHEA:46164"/>
        <dbReference type="ChEBI" id="CHEBI:15378"/>
        <dbReference type="ChEBI" id="CHEBI:24646"/>
        <dbReference type="ChEBI" id="CHEBI:57783"/>
        <dbReference type="ChEBI" id="CHEBI:58349"/>
        <dbReference type="ChEBI" id="CHEBI:132124"/>
        <dbReference type="EC" id="1.6.5.2"/>
    </reaction>
</comment>
<comment type="subunit">
    <text evidence="1">Interacts with KefB.</text>
</comment>
<comment type="subcellular location">
    <subcellularLocation>
        <location evidence="1">Cell inner membrane</location>
        <topology evidence="1">Peripheral membrane protein</topology>
        <orientation evidence="1">Cytoplasmic side</orientation>
    </subcellularLocation>
</comment>
<comment type="similarity">
    <text evidence="1">Belongs to the NAD(P)H dehydrogenase (quinone) family. KefG subfamily.</text>
</comment>
<accession>Q0TCA9</accession>
<name>KEFG_ECOL5</name>
<dbReference type="EC" id="1.6.5.2" evidence="1"/>
<dbReference type="EMBL" id="CP000247">
    <property type="protein sequence ID" value="ABG71420.1"/>
    <property type="molecule type" value="Genomic_DNA"/>
</dbReference>
<dbReference type="SMR" id="Q0TCA9"/>
<dbReference type="KEGG" id="ecp:ECP_3442"/>
<dbReference type="HOGENOM" id="CLU_058643_0_1_6"/>
<dbReference type="Proteomes" id="UP000009182">
    <property type="component" value="Chromosome"/>
</dbReference>
<dbReference type="GO" id="GO:0005886">
    <property type="term" value="C:plasma membrane"/>
    <property type="evidence" value="ECO:0007669"/>
    <property type="project" value="UniProtKB-SubCell"/>
</dbReference>
<dbReference type="GO" id="GO:0009055">
    <property type="term" value="F:electron transfer activity"/>
    <property type="evidence" value="ECO:0007669"/>
    <property type="project" value="TreeGrafter"/>
</dbReference>
<dbReference type="GO" id="GO:0010181">
    <property type="term" value="F:FMN binding"/>
    <property type="evidence" value="ECO:0007669"/>
    <property type="project" value="TreeGrafter"/>
</dbReference>
<dbReference type="GO" id="GO:0050136">
    <property type="term" value="F:NADH:ubiquinone reductase (non-electrogenic) activity"/>
    <property type="evidence" value="ECO:0007669"/>
    <property type="project" value="RHEA"/>
</dbReference>
<dbReference type="GO" id="GO:0008753">
    <property type="term" value="F:NADPH dehydrogenase (quinone) activity"/>
    <property type="evidence" value="ECO:0007669"/>
    <property type="project" value="RHEA"/>
</dbReference>
<dbReference type="GO" id="GO:1901381">
    <property type="term" value="P:positive regulation of potassium ion transmembrane transport"/>
    <property type="evidence" value="ECO:0007669"/>
    <property type="project" value="UniProtKB-UniRule"/>
</dbReference>
<dbReference type="GO" id="GO:0006813">
    <property type="term" value="P:potassium ion transport"/>
    <property type="evidence" value="ECO:0007669"/>
    <property type="project" value="InterPro"/>
</dbReference>
<dbReference type="FunFam" id="3.40.50.360:FF:000013">
    <property type="entry name" value="Glutathione-regulated potassium-efflux system ancillary protein KefG"/>
    <property type="match status" value="1"/>
</dbReference>
<dbReference type="Gene3D" id="3.40.50.360">
    <property type="match status" value="1"/>
</dbReference>
<dbReference type="HAMAP" id="MF_01415">
    <property type="entry name" value="K_H_efflux_KefG"/>
    <property type="match status" value="1"/>
</dbReference>
<dbReference type="InterPro" id="IPR003680">
    <property type="entry name" value="Flavodoxin_fold"/>
</dbReference>
<dbReference type="InterPro" id="IPR029039">
    <property type="entry name" value="Flavoprotein-like_sf"/>
</dbReference>
<dbReference type="InterPro" id="IPR023947">
    <property type="entry name" value="K_H_efflux_KefG"/>
</dbReference>
<dbReference type="InterPro" id="IPR046980">
    <property type="entry name" value="KefG/KefF"/>
</dbReference>
<dbReference type="NCBIfam" id="NF003430">
    <property type="entry name" value="PRK04930.1"/>
    <property type="match status" value="1"/>
</dbReference>
<dbReference type="PANTHER" id="PTHR47307">
    <property type="entry name" value="GLUTATHIONE-REGULATED POTASSIUM-EFFLUX SYSTEM ANCILLARY PROTEIN KEFG"/>
    <property type="match status" value="1"/>
</dbReference>
<dbReference type="PANTHER" id="PTHR47307:SF1">
    <property type="entry name" value="GLUTATHIONE-REGULATED POTASSIUM-EFFLUX SYSTEM ANCILLARY PROTEIN KEFG"/>
    <property type="match status" value="1"/>
</dbReference>
<dbReference type="Pfam" id="PF02525">
    <property type="entry name" value="Flavodoxin_2"/>
    <property type="match status" value="1"/>
</dbReference>
<dbReference type="SUPFAM" id="SSF52218">
    <property type="entry name" value="Flavoproteins"/>
    <property type="match status" value="1"/>
</dbReference>
<reference key="1">
    <citation type="journal article" date="2006" name="Mol. Microbiol.">
        <title>Role of pathogenicity island-associated integrases in the genome plasticity of uropathogenic Escherichia coli strain 536.</title>
        <authorList>
            <person name="Hochhut B."/>
            <person name="Wilde C."/>
            <person name="Balling G."/>
            <person name="Middendorf B."/>
            <person name="Dobrindt U."/>
            <person name="Brzuszkiewicz E."/>
            <person name="Gottschalk G."/>
            <person name="Carniel E."/>
            <person name="Hacker J."/>
        </authorList>
    </citation>
    <scope>NUCLEOTIDE SEQUENCE [LARGE SCALE GENOMIC DNA]</scope>
    <source>
        <strain>536 / UPEC</strain>
    </source>
</reference>
<proteinExistence type="inferred from homology"/>
<keyword id="KW-0997">Cell inner membrane</keyword>
<keyword id="KW-1003">Cell membrane</keyword>
<keyword id="KW-0472">Membrane</keyword>
<keyword id="KW-0520">NAD</keyword>
<keyword id="KW-0560">Oxidoreductase</keyword>
<organism>
    <name type="scientific">Escherichia coli O6:K15:H31 (strain 536 / UPEC)</name>
    <dbReference type="NCBI Taxonomy" id="362663"/>
    <lineage>
        <taxon>Bacteria</taxon>
        <taxon>Pseudomonadati</taxon>
        <taxon>Pseudomonadota</taxon>
        <taxon>Gammaproteobacteria</taxon>
        <taxon>Enterobacterales</taxon>
        <taxon>Enterobacteriaceae</taxon>
        <taxon>Escherichia</taxon>
    </lineage>
</organism>
<feature type="chain" id="PRO_1000068478" description="Glutathione-regulated potassium-efflux system ancillary protein KefG">
    <location>
        <begin position="1"/>
        <end position="183"/>
    </location>
</feature>
<gene>
    <name evidence="1" type="primary">kefG</name>
    <name type="ordered locus">ECP_3442</name>
</gene>
<sequence length="183" mass="20804">MSQPAKVLLLYAHPESQDSVANWVLLKPATQLSNVTVHDLYAHYPDFFIDIPREQALLREHEVIVFQHPLYTYSCPALLKEWLDRVLSRGFASGPGGNQLAGKYWRSVITTGEPESAYRYDALNRYPMSDVLRPFELAAGMCRMHWLSPIIIYWARRQSAQELASHARAYGDWLANPLSPGGC</sequence>
<protein>
    <recommendedName>
        <fullName evidence="1">Glutathione-regulated potassium-efflux system ancillary protein KefG</fullName>
    </recommendedName>
    <alternativeName>
        <fullName evidence="1">Putative quinone oxidoreductase KefG</fullName>
        <ecNumber evidence="1">1.6.5.2</ecNumber>
    </alternativeName>
</protein>
<evidence type="ECO:0000255" key="1">
    <source>
        <dbReference type="HAMAP-Rule" id="MF_01415"/>
    </source>
</evidence>